<gene>
    <name evidence="5" type="primary">BAT1</name>
    <name evidence="7" type="synonym">DRL1</name>
    <name evidence="6" type="synonym">PIZ</name>
    <name evidence="9" type="ordered locus">At4g31910</name>
    <name evidence="10" type="ORF">F10N7.280</name>
    <name evidence="11" type="ORF">F11C18.110</name>
</gene>
<feature type="chain" id="PRO_0000436332" description="Brassinosteroid-related acyltransferase 1">
    <location>
        <begin position="1"/>
        <end position="458"/>
    </location>
</feature>
<feature type="active site" description="Proton acceptor" evidence="1">
    <location>
        <position position="164"/>
    </location>
</feature>
<protein>
    <recommendedName>
        <fullName evidence="5">Brassinosteroid-related acyltransferase 1</fullName>
        <shortName evidence="5">BR-related acyltransferase 1</shortName>
        <ecNumber evidence="3 4">2.3.1.-</ecNumber>
    </recommendedName>
    <alternativeName>
        <fullName evidence="7">Protein DWARF AND ROUND LEAF 1</fullName>
    </alternativeName>
    <alternativeName>
        <fullName evidence="6">Protein PIZZA</fullName>
    </alternativeName>
</protein>
<accession>Q9SZ58</accession>
<accession>Q9SZ47</accession>
<proteinExistence type="evidence at transcript level"/>
<keyword id="KW-0012">Acyltransferase</keyword>
<keyword id="KW-1069">Brassinosteroid biosynthesis</keyword>
<keyword id="KW-0256">Endoplasmic reticulum</keyword>
<keyword id="KW-0444">Lipid biosynthesis</keyword>
<keyword id="KW-0443">Lipid metabolism</keyword>
<keyword id="KW-0539">Nucleus</keyword>
<keyword id="KW-1185">Reference proteome</keyword>
<keyword id="KW-0752">Steroid biosynthesis</keyword>
<keyword id="KW-0808">Transferase</keyword>
<name>BRAT1_ARATH</name>
<dbReference type="EC" id="2.3.1.-" evidence="3 4"/>
<dbReference type="EMBL" id="AL021636">
    <property type="protein sequence ID" value="CAA16598.1"/>
    <property type="status" value="ALT_SEQ"/>
    <property type="molecule type" value="Genomic_DNA"/>
</dbReference>
<dbReference type="EMBL" id="AL049607">
    <property type="protein sequence ID" value="CAB40761.1"/>
    <property type="molecule type" value="Genomic_DNA"/>
</dbReference>
<dbReference type="EMBL" id="AL161580">
    <property type="protein sequence ID" value="CAB79909.1"/>
    <property type="molecule type" value="Genomic_DNA"/>
</dbReference>
<dbReference type="EMBL" id="CP002687">
    <property type="protein sequence ID" value="AEE85978.1"/>
    <property type="molecule type" value="Genomic_DNA"/>
</dbReference>
<dbReference type="EMBL" id="AY052280">
    <property type="protein sequence ID" value="AAK96473.1"/>
    <property type="molecule type" value="mRNA"/>
</dbReference>
<dbReference type="EMBL" id="AY139805">
    <property type="protein sequence ID" value="AAM98111.1"/>
    <property type="molecule type" value="mRNA"/>
</dbReference>
<dbReference type="PIR" id="T06313">
    <property type="entry name" value="T06313"/>
</dbReference>
<dbReference type="RefSeq" id="NP_194919.1">
    <property type="nucleotide sequence ID" value="NM_119342.3"/>
</dbReference>
<dbReference type="SMR" id="Q9SZ58"/>
<dbReference type="FunCoup" id="Q9SZ58">
    <property type="interactions" value="2"/>
</dbReference>
<dbReference type="STRING" id="3702.Q9SZ58"/>
<dbReference type="iPTMnet" id="Q9SZ58"/>
<dbReference type="PaxDb" id="3702-AT4G31910.1"/>
<dbReference type="ProteomicsDB" id="240411"/>
<dbReference type="EnsemblPlants" id="AT4G31910.1">
    <property type="protein sequence ID" value="AT4G31910.1"/>
    <property type="gene ID" value="AT4G31910"/>
</dbReference>
<dbReference type="GeneID" id="829321"/>
<dbReference type="Gramene" id="AT4G31910.1">
    <property type="protein sequence ID" value="AT4G31910.1"/>
    <property type="gene ID" value="AT4G31910"/>
</dbReference>
<dbReference type="KEGG" id="ath:AT4G31910"/>
<dbReference type="Araport" id="AT4G31910"/>
<dbReference type="TAIR" id="AT4G31910">
    <property type="gene designation" value="BAT1"/>
</dbReference>
<dbReference type="eggNOG" id="ENOG502QSIF">
    <property type="taxonomic scope" value="Eukaryota"/>
</dbReference>
<dbReference type="HOGENOM" id="CLU_014546_2_2_1"/>
<dbReference type="InParanoid" id="Q9SZ58"/>
<dbReference type="OMA" id="FGCGGYA"/>
<dbReference type="PhylomeDB" id="Q9SZ58"/>
<dbReference type="BioCyc" id="ARA:AT4G31910-MONOMER"/>
<dbReference type="UniPathway" id="UPA00381"/>
<dbReference type="PRO" id="PR:Q9SZ58"/>
<dbReference type="Proteomes" id="UP000006548">
    <property type="component" value="Chromosome 4"/>
</dbReference>
<dbReference type="ExpressionAtlas" id="Q9SZ58">
    <property type="expression patterns" value="baseline and differential"/>
</dbReference>
<dbReference type="GO" id="GO:0005783">
    <property type="term" value="C:endoplasmic reticulum"/>
    <property type="evidence" value="ECO:0000314"/>
    <property type="project" value="TAIR"/>
</dbReference>
<dbReference type="GO" id="GO:0005634">
    <property type="term" value="C:nucleus"/>
    <property type="evidence" value="ECO:0000314"/>
    <property type="project" value="TAIR"/>
</dbReference>
<dbReference type="GO" id="GO:0016747">
    <property type="term" value="F:acyltransferase activity, transferring groups other than amino-acyl groups"/>
    <property type="evidence" value="ECO:0000314"/>
    <property type="project" value="CACAO"/>
</dbReference>
<dbReference type="GO" id="GO:0004467">
    <property type="term" value="F:long-chain fatty acid-CoA ligase activity"/>
    <property type="evidence" value="ECO:0000314"/>
    <property type="project" value="TAIR"/>
</dbReference>
<dbReference type="GO" id="GO:0016132">
    <property type="term" value="P:brassinosteroid biosynthetic process"/>
    <property type="evidence" value="ECO:0000315"/>
    <property type="project" value="UniProtKB"/>
</dbReference>
<dbReference type="GO" id="GO:0010087">
    <property type="term" value="P:phloem or xylem histogenesis"/>
    <property type="evidence" value="ECO:0000315"/>
    <property type="project" value="TAIR"/>
</dbReference>
<dbReference type="GO" id="GO:0001558">
    <property type="term" value="P:regulation of cell growth"/>
    <property type="evidence" value="ECO:0000315"/>
    <property type="project" value="UniProtKB"/>
</dbReference>
<dbReference type="GO" id="GO:0009737">
    <property type="term" value="P:response to abscisic acid"/>
    <property type="evidence" value="ECO:0000270"/>
    <property type="project" value="UniProtKB"/>
</dbReference>
<dbReference type="GO" id="GO:0009733">
    <property type="term" value="P:response to auxin"/>
    <property type="evidence" value="ECO:0000270"/>
    <property type="project" value="UniProtKB"/>
</dbReference>
<dbReference type="GO" id="GO:0009741">
    <property type="term" value="P:response to brassinosteroid"/>
    <property type="evidence" value="ECO:0000270"/>
    <property type="project" value="UniProtKB"/>
</dbReference>
<dbReference type="FunFam" id="3.30.559.10:FF:000185">
    <property type="entry name" value="Brassinosteroid-related acyltransferase 1"/>
    <property type="match status" value="1"/>
</dbReference>
<dbReference type="Gene3D" id="3.30.559.10">
    <property type="entry name" value="Chloramphenicol acetyltransferase-like domain"/>
    <property type="match status" value="2"/>
</dbReference>
<dbReference type="InterPro" id="IPR023213">
    <property type="entry name" value="CAT-like_dom_sf"/>
</dbReference>
<dbReference type="InterPro" id="IPR050317">
    <property type="entry name" value="Plant_Fungal_Acyltransferase"/>
</dbReference>
<dbReference type="PANTHER" id="PTHR31642:SF145">
    <property type="entry name" value="BRASSINOSTEROID-RELATED ACYLTRANSFERASE 1"/>
    <property type="match status" value="1"/>
</dbReference>
<dbReference type="PANTHER" id="PTHR31642">
    <property type="entry name" value="TRICHOTHECENE 3-O-ACETYLTRANSFERASE"/>
    <property type="match status" value="1"/>
</dbReference>
<dbReference type="Pfam" id="PF02458">
    <property type="entry name" value="Transferase"/>
    <property type="match status" value="1"/>
</dbReference>
<sequence>MPMLMATRIDIIQKLNVYPRFQNHDKKKLITLSNLDRQCPLLMYSVFFYKNTTTRDFDSVFSNLKLGLEETMSVWYPAAGRLGLDGGGCKLNIRCNDGGAVMVEAVATGVKLSELGDLTQYNEFYENLVYKPSLDGDFSVMPLVVAQVTRFACGGYSIGIGTSHSLFDGISAYEFIHAWASNSHIHNKSNSKITNKKEDVVIKPVHDRRNLLVNRDAVRETNAAAICHLYQLIKQAMMTYQEQNRNLELPDSGFVIKTFELNGDAIESMKKKSLEGFMCSSFEFLAAHLWKARTRALGLRRDAMVCLQFAVDIRKRTETPLPEGFSGNAYVLASVASTARELLEELTLESIVNKIREAKKSIDQGYINSYMEALGGSNDGNLPPLKELTLISDWTKMPFHNVGFGNGGEPADYMAPLCPPVPQVAYFMKNPKDAKGVLVRIGLDPRDVNGFSNHFLDC</sequence>
<reference key="1">
    <citation type="journal article" date="1999" name="Nature">
        <title>Sequence and analysis of chromosome 4 of the plant Arabidopsis thaliana.</title>
        <authorList>
            <person name="Mayer K.F.X."/>
            <person name="Schueller C."/>
            <person name="Wambutt R."/>
            <person name="Murphy G."/>
            <person name="Volckaert G."/>
            <person name="Pohl T."/>
            <person name="Duesterhoeft A."/>
            <person name="Stiekema W."/>
            <person name="Entian K.-D."/>
            <person name="Terryn N."/>
            <person name="Harris B."/>
            <person name="Ansorge W."/>
            <person name="Brandt P."/>
            <person name="Grivell L.A."/>
            <person name="Rieger M."/>
            <person name="Weichselgartner M."/>
            <person name="de Simone V."/>
            <person name="Obermaier B."/>
            <person name="Mache R."/>
            <person name="Mueller M."/>
            <person name="Kreis M."/>
            <person name="Delseny M."/>
            <person name="Puigdomenech P."/>
            <person name="Watson M."/>
            <person name="Schmidtheini T."/>
            <person name="Reichert B."/>
            <person name="Portetelle D."/>
            <person name="Perez-Alonso M."/>
            <person name="Boutry M."/>
            <person name="Bancroft I."/>
            <person name="Vos P."/>
            <person name="Hoheisel J."/>
            <person name="Zimmermann W."/>
            <person name="Wedler H."/>
            <person name="Ridley P."/>
            <person name="Langham S.-A."/>
            <person name="McCullagh B."/>
            <person name="Bilham L."/>
            <person name="Robben J."/>
            <person name="van der Schueren J."/>
            <person name="Grymonprez B."/>
            <person name="Chuang Y.-J."/>
            <person name="Vandenbussche F."/>
            <person name="Braeken M."/>
            <person name="Weltjens I."/>
            <person name="Voet M."/>
            <person name="Bastiaens I."/>
            <person name="Aert R."/>
            <person name="Defoor E."/>
            <person name="Weitzenegger T."/>
            <person name="Bothe G."/>
            <person name="Ramsperger U."/>
            <person name="Hilbert H."/>
            <person name="Braun M."/>
            <person name="Holzer E."/>
            <person name="Brandt A."/>
            <person name="Peters S."/>
            <person name="van Staveren M."/>
            <person name="Dirkse W."/>
            <person name="Mooijman P."/>
            <person name="Klein Lankhorst R."/>
            <person name="Rose M."/>
            <person name="Hauf J."/>
            <person name="Koetter P."/>
            <person name="Berneiser S."/>
            <person name="Hempel S."/>
            <person name="Feldpausch M."/>
            <person name="Lamberth S."/>
            <person name="Van den Daele H."/>
            <person name="De Keyser A."/>
            <person name="Buysshaert C."/>
            <person name="Gielen J."/>
            <person name="Villarroel R."/>
            <person name="De Clercq R."/>
            <person name="van Montagu M."/>
            <person name="Rogers J."/>
            <person name="Cronin A."/>
            <person name="Quail M.A."/>
            <person name="Bray-Allen S."/>
            <person name="Clark L."/>
            <person name="Doggett J."/>
            <person name="Hall S."/>
            <person name="Kay M."/>
            <person name="Lennard N."/>
            <person name="McLay K."/>
            <person name="Mayes R."/>
            <person name="Pettett A."/>
            <person name="Rajandream M.A."/>
            <person name="Lyne M."/>
            <person name="Benes V."/>
            <person name="Rechmann S."/>
            <person name="Borkova D."/>
            <person name="Bloecker H."/>
            <person name="Scharfe M."/>
            <person name="Grimm M."/>
            <person name="Loehnert T.-H."/>
            <person name="Dose S."/>
            <person name="de Haan M."/>
            <person name="Maarse A.C."/>
            <person name="Schaefer M."/>
            <person name="Mueller-Auer S."/>
            <person name="Gabel C."/>
            <person name="Fuchs M."/>
            <person name="Fartmann B."/>
            <person name="Granderath K."/>
            <person name="Dauner D."/>
            <person name="Herzl A."/>
            <person name="Neumann S."/>
            <person name="Argiriou A."/>
            <person name="Vitale D."/>
            <person name="Liguori R."/>
            <person name="Piravandi E."/>
            <person name="Massenet O."/>
            <person name="Quigley F."/>
            <person name="Clabauld G."/>
            <person name="Muendlein A."/>
            <person name="Felber R."/>
            <person name="Schnabl S."/>
            <person name="Hiller R."/>
            <person name="Schmidt W."/>
            <person name="Lecharny A."/>
            <person name="Aubourg S."/>
            <person name="Chefdor F."/>
            <person name="Cooke R."/>
            <person name="Berger C."/>
            <person name="Monfort A."/>
            <person name="Casacuberta E."/>
            <person name="Gibbons T."/>
            <person name="Weber N."/>
            <person name="Vandenbol M."/>
            <person name="Bargues M."/>
            <person name="Terol J."/>
            <person name="Torres A."/>
            <person name="Perez-Perez A."/>
            <person name="Purnelle B."/>
            <person name="Bent E."/>
            <person name="Johnson S."/>
            <person name="Tacon D."/>
            <person name="Jesse T."/>
            <person name="Heijnen L."/>
            <person name="Schwarz S."/>
            <person name="Scholler P."/>
            <person name="Heber S."/>
            <person name="Francs P."/>
            <person name="Bielke C."/>
            <person name="Frishman D."/>
            <person name="Haase D."/>
            <person name="Lemcke K."/>
            <person name="Mewes H.-W."/>
            <person name="Stocker S."/>
            <person name="Zaccaria P."/>
            <person name="Bevan M."/>
            <person name="Wilson R.K."/>
            <person name="de la Bastide M."/>
            <person name="Habermann K."/>
            <person name="Parnell L."/>
            <person name="Dedhia N."/>
            <person name="Gnoj L."/>
            <person name="Schutz K."/>
            <person name="Huang E."/>
            <person name="Spiegel L."/>
            <person name="Sekhon M."/>
            <person name="Murray J."/>
            <person name="Sheet P."/>
            <person name="Cordes M."/>
            <person name="Abu-Threideh J."/>
            <person name="Stoneking T."/>
            <person name="Kalicki J."/>
            <person name="Graves T."/>
            <person name="Harmon G."/>
            <person name="Edwards J."/>
            <person name="Latreille P."/>
            <person name="Courtney L."/>
            <person name="Cloud J."/>
            <person name="Abbott A."/>
            <person name="Scott K."/>
            <person name="Johnson D."/>
            <person name="Minx P."/>
            <person name="Bentley D."/>
            <person name="Fulton B."/>
            <person name="Miller N."/>
            <person name="Greco T."/>
            <person name="Kemp K."/>
            <person name="Kramer J."/>
            <person name="Fulton L."/>
            <person name="Mardis E."/>
            <person name="Dante M."/>
            <person name="Pepin K."/>
            <person name="Hillier L.W."/>
            <person name="Nelson J."/>
            <person name="Spieth J."/>
            <person name="Ryan E."/>
            <person name="Andrews S."/>
            <person name="Geisel C."/>
            <person name="Layman D."/>
            <person name="Du H."/>
            <person name="Ali J."/>
            <person name="Berghoff A."/>
            <person name="Jones K."/>
            <person name="Drone K."/>
            <person name="Cotton M."/>
            <person name="Joshu C."/>
            <person name="Antonoiu B."/>
            <person name="Zidanic M."/>
            <person name="Strong C."/>
            <person name="Sun H."/>
            <person name="Lamar B."/>
            <person name="Yordan C."/>
            <person name="Ma P."/>
            <person name="Zhong J."/>
            <person name="Preston R."/>
            <person name="Vil D."/>
            <person name="Shekher M."/>
            <person name="Matero A."/>
            <person name="Shah R."/>
            <person name="Swaby I.K."/>
            <person name="O'Shaughnessy A."/>
            <person name="Rodriguez M."/>
            <person name="Hoffman J."/>
            <person name="Till S."/>
            <person name="Granat S."/>
            <person name="Shohdy N."/>
            <person name="Hasegawa A."/>
            <person name="Hameed A."/>
            <person name="Lodhi M."/>
            <person name="Johnson A."/>
            <person name="Chen E."/>
            <person name="Marra M.A."/>
            <person name="Martienssen R."/>
            <person name="McCombie W.R."/>
        </authorList>
    </citation>
    <scope>NUCLEOTIDE SEQUENCE [LARGE SCALE GENOMIC DNA]</scope>
    <source>
        <strain>cv. Columbia</strain>
    </source>
</reference>
<reference key="2">
    <citation type="journal article" date="2017" name="Plant J.">
        <title>Araport11: a complete reannotation of the Arabidopsis thaliana reference genome.</title>
        <authorList>
            <person name="Cheng C.Y."/>
            <person name="Krishnakumar V."/>
            <person name="Chan A.P."/>
            <person name="Thibaud-Nissen F."/>
            <person name="Schobel S."/>
            <person name="Town C.D."/>
        </authorList>
    </citation>
    <scope>GENOME REANNOTATION</scope>
    <source>
        <strain>cv. Columbia</strain>
    </source>
</reference>
<reference key="3">
    <citation type="journal article" date="2003" name="Science">
        <title>Empirical analysis of transcriptional activity in the Arabidopsis genome.</title>
        <authorList>
            <person name="Yamada K."/>
            <person name="Lim J."/>
            <person name="Dale J.M."/>
            <person name="Chen H."/>
            <person name="Shinn P."/>
            <person name="Palm C.J."/>
            <person name="Southwick A.M."/>
            <person name="Wu H.C."/>
            <person name="Kim C.J."/>
            <person name="Nguyen M."/>
            <person name="Pham P.K."/>
            <person name="Cheuk R.F."/>
            <person name="Karlin-Newmann G."/>
            <person name="Liu S.X."/>
            <person name="Lam B."/>
            <person name="Sakano H."/>
            <person name="Wu T."/>
            <person name="Yu G."/>
            <person name="Miranda M."/>
            <person name="Quach H.L."/>
            <person name="Tripp M."/>
            <person name="Chang C.H."/>
            <person name="Lee J.M."/>
            <person name="Toriumi M.J."/>
            <person name="Chan M.M."/>
            <person name="Tang C.C."/>
            <person name="Onodera C.S."/>
            <person name="Deng J.M."/>
            <person name="Akiyama K."/>
            <person name="Ansari Y."/>
            <person name="Arakawa T."/>
            <person name="Banh J."/>
            <person name="Banno F."/>
            <person name="Bowser L."/>
            <person name="Brooks S.Y."/>
            <person name="Carninci P."/>
            <person name="Chao Q."/>
            <person name="Choy N."/>
            <person name="Enju A."/>
            <person name="Goldsmith A.D."/>
            <person name="Gurjal M."/>
            <person name="Hansen N.F."/>
            <person name="Hayashizaki Y."/>
            <person name="Johnson-Hopson C."/>
            <person name="Hsuan V.W."/>
            <person name="Iida K."/>
            <person name="Karnes M."/>
            <person name="Khan S."/>
            <person name="Koesema E."/>
            <person name="Ishida J."/>
            <person name="Jiang P.X."/>
            <person name="Jones T."/>
            <person name="Kawai J."/>
            <person name="Kamiya A."/>
            <person name="Meyers C."/>
            <person name="Nakajima M."/>
            <person name="Narusaka M."/>
            <person name="Seki M."/>
            <person name="Sakurai T."/>
            <person name="Satou M."/>
            <person name="Tamse R."/>
            <person name="Vaysberg M."/>
            <person name="Wallender E.K."/>
            <person name="Wong C."/>
            <person name="Yamamura Y."/>
            <person name="Yuan S."/>
            <person name="Shinozaki K."/>
            <person name="Davis R.W."/>
            <person name="Theologis A."/>
            <person name="Ecker J.R."/>
        </authorList>
    </citation>
    <scope>NUCLEOTIDE SEQUENCE [LARGE SCALE MRNA]</scope>
    <source>
        <strain>cv. Columbia</strain>
    </source>
</reference>
<reference key="4">
    <citation type="journal article" date="2012" name="PLoS ONE">
        <title>Arabidopsis PIZZA has the capacity to acylate brassinosteroids.</title>
        <authorList>
            <person name="Schneider K."/>
            <person name="Breuer C."/>
            <person name="Kawamura A."/>
            <person name="Jikumaru Y."/>
            <person name="Hanada A."/>
            <person name="Fujioka S."/>
            <person name="Ichikawa T."/>
            <person name="Kondou Y."/>
            <person name="Matsui M."/>
            <person name="Kamiya Y."/>
            <person name="Yamaguchi S."/>
            <person name="Sugimoto K."/>
        </authorList>
    </citation>
    <scope>PATHWAY</scope>
    <scope>FUNCTION</scope>
    <scope>DISRUPTION PHENOTYPE</scope>
    <source>
        <strain>cv. Columbia</strain>
    </source>
</reference>
<reference key="5">
    <citation type="journal article" date="2013" name="Mol. Plant">
        <title>Homeostasis of brassinosteroids regulated by DRL1, a putative acyltransferase in Arabidopsis.</title>
        <authorList>
            <person name="Zhu W."/>
            <person name="Wang H."/>
            <person name="Fujioka S."/>
            <person name="Zhou T."/>
            <person name="Tian H."/>
            <person name="Tian W."/>
            <person name="Wang X."/>
        </authorList>
    </citation>
    <scope>FUNCTION</scope>
    <scope>DISRUPTION PHENOTYPE</scope>
    <scope>TISSUE SPECIFICITY</scope>
    <scope>INDUCTION BY 24-EPIBL AND ABA</scope>
    <scope>PATHWAY</scope>
    <source>
        <strain>cv. Columbia</strain>
    </source>
</reference>
<reference key="6">
    <citation type="journal article" date="2013" name="Plant J.">
        <title>BAT1, a putative acyltransferase, modulates brassinosteroid levels in Arabidopsis.</title>
        <authorList>
            <person name="Choi S."/>
            <person name="Cho Y.H."/>
            <person name="Kim K."/>
            <person name="Matsui M."/>
            <person name="Son S.-H."/>
            <person name="Kim S.-K."/>
            <person name="Fujioka S."/>
            <person name="Hwang I."/>
        </authorList>
    </citation>
    <scope>FUNCTION</scope>
    <scope>DISRUPTION PHENOTYPE</scope>
    <scope>SUBCELLULAR LOCATION</scope>
    <scope>TISSUE SPECIFICITY</scope>
    <scope>INDUCTION BY AUXIN</scope>
    <scope>DEVELOPMENTAL STAGE</scope>
    <source>
        <strain>cv. Columbia</strain>
    </source>
</reference>
<evidence type="ECO:0000250" key="1">
    <source>
        <dbReference type="UniProtKB" id="Q70PR7"/>
    </source>
</evidence>
<evidence type="ECO:0000269" key="2">
    <source>
    </source>
</evidence>
<evidence type="ECO:0000269" key="3">
    <source>
    </source>
</evidence>
<evidence type="ECO:0000269" key="4">
    <source>
    </source>
</evidence>
<evidence type="ECO:0000303" key="5">
    <source>
    </source>
</evidence>
<evidence type="ECO:0000303" key="6">
    <source>
    </source>
</evidence>
<evidence type="ECO:0000303" key="7">
    <source>
    </source>
</evidence>
<evidence type="ECO:0000305" key="8"/>
<evidence type="ECO:0000312" key="9">
    <source>
        <dbReference type="Araport" id="AT4G31910"/>
    </source>
</evidence>
<evidence type="ECO:0000312" key="10">
    <source>
        <dbReference type="EMBL" id="CAA16598.1"/>
    </source>
</evidence>
<evidence type="ECO:0000312" key="11">
    <source>
        <dbReference type="EMBL" id="CAB40761.1"/>
    </source>
</evidence>
<organism>
    <name type="scientific">Arabidopsis thaliana</name>
    <name type="common">Mouse-ear cress</name>
    <dbReference type="NCBI Taxonomy" id="3702"/>
    <lineage>
        <taxon>Eukaryota</taxon>
        <taxon>Viridiplantae</taxon>
        <taxon>Streptophyta</taxon>
        <taxon>Embryophyta</taxon>
        <taxon>Tracheophyta</taxon>
        <taxon>Spermatophyta</taxon>
        <taxon>Magnoliopsida</taxon>
        <taxon>eudicotyledons</taxon>
        <taxon>Gunneridae</taxon>
        <taxon>Pentapetalae</taxon>
        <taxon>rosids</taxon>
        <taxon>malvids</taxon>
        <taxon>Brassicales</taxon>
        <taxon>Brassicaceae</taxon>
        <taxon>Camelineae</taxon>
        <taxon>Arabidopsis</taxon>
    </lineage>
</organism>
<comment type="function">
    <text evidence="2 3 4">Brassinosteroids (BR) acyltransferase with acyl-CoA ligase activity toward brassinolide (BL), castasterone (CS), typhasterol (TY), 6-deoxotyphasterol (6-deoxoTY), and 6-deoxocastasterone (6-deoxoCS) and thus converts them to corresponding lauroyl esters (PubMed:23020607, PubMed:23071642, PubMed:23204503). Regulates BR homeostasis and promotes BR-mediated cell growth regulation (PubMed:23071642, PubMed:23204503). Involved in vascular bundle development (PubMed:23020607).</text>
</comment>
<comment type="pathway">
    <text evidence="3 4">Plant hormone biosynthesis; brassinosteroid biosynthesis.</text>
</comment>
<comment type="subcellular location">
    <subcellularLocation>
        <location evidence="2">Endoplasmic reticulum</location>
    </subcellularLocation>
    <subcellularLocation>
        <location evidence="2">Nucleus</location>
    </subcellularLocation>
    <text evidence="2">Localizes in the endoplasmic reticulum in young tissues and the phloem of vascular bundles.</text>
</comment>
<comment type="tissue specificity">
    <text evidence="2 4">Highly expressed in young tissues and vascular bundles (PubMed:23020607). Mostly expressed in young leaves, primary roots, flowers (including petals and sepals), and siliques (PubMed:23204503).</text>
</comment>
<comment type="developmental stage">
    <text evidence="2">In young seedlings, mainly observed in the vascular cylinder of cotyledons, leaves and hypocotyls. Accumulates also in root tips, lateral root initiation sites and the maturation zone of the primary root. In adult plants, present in the vasculature of the inflorescence stems, especially in phloem cells.</text>
</comment>
<comment type="induction">
    <text evidence="2 4">Induced by 24-epi-brassinolide (24-epiBL, eBL) and inhibited by abscisic acid (ABA) (PubMed:23204503). Stimulated by auxin (PubMed:23020607).</text>
</comment>
<comment type="disruption phenotype">
    <text evidence="2 3 4">No obvious growth phenotype under standard growth conditions (PubMed:23071642, PubMed:23204503). The bat1-1 mutant exhibits longer stems before flowering, but reaches normal height after flowering, with larger inflorescence stems containing an increased number of vascular bundles (PubMed:23020607).</text>
</comment>
<comment type="similarity">
    <text evidence="8">Belongs to the plant acyltransferase family.</text>
</comment>
<comment type="sequence caution" evidence="8">
    <conflict type="erroneous gene model prediction">
        <sequence resource="EMBL-CDS" id="CAA16598"/>
    </conflict>
</comment>